<name>RL14_PSEPG</name>
<comment type="function">
    <text evidence="1">Binds to 23S rRNA. Forms part of two intersubunit bridges in the 70S ribosome.</text>
</comment>
<comment type="subunit">
    <text evidence="1">Part of the 50S ribosomal subunit. Forms a cluster with proteins L3 and L19. In the 70S ribosome, L14 and L19 interact and together make contacts with the 16S rRNA in bridges B5 and B8.</text>
</comment>
<comment type="similarity">
    <text evidence="1">Belongs to the universal ribosomal protein uL14 family.</text>
</comment>
<reference key="1">
    <citation type="submission" date="2008-01" db="EMBL/GenBank/DDBJ databases">
        <title>Complete sequence of Pseudomonas putida GB-1.</title>
        <authorList>
            <consortium name="US DOE Joint Genome Institute"/>
            <person name="Copeland A."/>
            <person name="Lucas S."/>
            <person name="Lapidus A."/>
            <person name="Barry K."/>
            <person name="Glavina del Rio T."/>
            <person name="Dalin E."/>
            <person name="Tice H."/>
            <person name="Pitluck S."/>
            <person name="Bruce D."/>
            <person name="Goodwin L."/>
            <person name="Chertkov O."/>
            <person name="Brettin T."/>
            <person name="Detter J.C."/>
            <person name="Han C."/>
            <person name="Kuske C.R."/>
            <person name="Schmutz J."/>
            <person name="Larimer F."/>
            <person name="Land M."/>
            <person name="Hauser L."/>
            <person name="Kyrpides N."/>
            <person name="Kim E."/>
            <person name="McCarthy J.K."/>
            <person name="Richardson P."/>
        </authorList>
    </citation>
    <scope>NUCLEOTIDE SEQUENCE [LARGE SCALE GENOMIC DNA]</scope>
    <source>
        <strain>GB-1</strain>
    </source>
</reference>
<organism>
    <name type="scientific">Pseudomonas putida (strain GB-1)</name>
    <dbReference type="NCBI Taxonomy" id="76869"/>
    <lineage>
        <taxon>Bacteria</taxon>
        <taxon>Pseudomonadati</taxon>
        <taxon>Pseudomonadota</taxon>
        <taxon>Gammaproteobacteria</taxon>
        <taxon>Pseudomonadales</taxon>
        <taxon>Pseudomonadaceae</taxon>
        <taxon>Pseudomonas</taxon>
    </lineage>
</organism>
<gene>
    <name evidence="1" type="primary">rplN</name>
    <name type="ordered locus">PputGB1_0494</name>
</gene>
<dbReference type="EMBL" id="CP000926">
    <property type="protein sequence ID" value="ABY96405.1"/>
    <property type="molecule type" value="Genomic_DNA"/>
</dbReference>
<dbReference type="RefSeq" id="WP_002555479.1">
    <property type="nucleotide sequence ID" value="NC_010322.1"/>
</dbReference>
<dbReference type="SMR" id="B0KK77"/>
<dbReference type="GeneID" id="98285428"/>
<dbReference type="KEGG" id="ppg:PputGB1_0494"/>
<dbReference type="eggNOG" id="COG0093">
    <property type="taxonomic scope" value="Bacteria"/>
</dbReference>
<dbReference type="HOGENOM" id="CLU_095071_2_1_6"/>
<dbReference type="Proteomes" id="UP000002157">
    <property type="component" value="Chromosome"/>
</dbReference>
<dbReference type="GO" id="GO:0022625">
    <property type="term" value="C:cytosolic large ribosomal subunit"/>
    <property type="evidence" value="ECO:0007669"/>
    <property type="project" value="TreeGrafter"/>
</dbReference>
<dbReference type="GO" id="GO:0070180">
    <property type="term" value="F:large ribosomal subunit rRNA binding"/>
    <property type="evidence" value="ECO:0007669"/>
    <property type="project" value="TreeGrafter"/>
</dbReference>
<dbReference type="GO" id="GO:0003735">
    <property type="term" value="F:structural constituent of ribosome"/>
    <property type="evidence" value="ECO:0007669"/>
    <property type="project" value="InterPro"/>
</dbReference>
<dbReference type="GO" id="GO:0006412">
    <property type="term" value="P:translation"/>
    <property type="evidence" value="ECO:0007669"/>
    <property type="project" value="UniProtKB-UniRule"/>
</dbReference>
<dbReference type="CDD" id="cd00337">
    <property type="entry name" value="Ribosomal_uL14"/>
    <property type="match status" value="1"/>
</dbReference>
<dbReference type="FunFam" id="2.40.150.20:FF:000001">
    <property type="entry name" value="50S ribosomal protein L14"/>
    <property type="match status" value="1"/>
</dbReference>
<dbReference type="Gene3D" id="2.40.150.20">
    <property type="entry name" value="Ribosomal protein L14"/>
    <property type="match status" value="1"/>
</dbReference>
<dbReference type="HAMAP" id="MF_01367">
    <property type="entry name" value="Ribosomal_uL14"/>
    <property type="match status" value="1"/>
</dbReference>
<dbReference type="InterPro" id="IPR000218">
    <property type="entry name" value="Ribosomal_uL14"/>
</dbReference>
<dbReference type="InterPro" id="IPR005745">
    <property type="entry name" value="Ribosomal_uL14_bac-type"/>
</dbReference>
<dbReference type="InterPro" id="IPR019972">
    <property type="entry name" value="Ribosomal_uL14_CS"/>
</dbReference>
<dbReference type="InterPro" id="IPR036853">
    <property type="entry name" value="Ribosomal_uL14_sf"/>
</dbReference>
<dbReference type="NCBIfam" id="TIGR01067">
    <property type="entry name" value="rplN_bact"/>
    <property type="match status" value="1"/>
</dbReference>
<dbReference type="PANTHER" id="PTHR11761">
    <property type="entry name" value="50S/60S RIBOSOMAL PROTEIN L14/L23"/>
    <property type="match status" value="1"/>
</dbReference>
<dbReference type="PANTHER" id="PTHR11761:SF3">
    <property type="entry name" value="LARGE RIBOSOMAL SUBUNIT PROTEIN UL14M"/>
    <property type="match status" value="1"/>
</dbReference>
<dbReference type="Pfam" id="PF00238">
    <property type="entry name" value="Ribosomal_L14"/>
    <property type="match status" value="1"/>
</dbReference>
<dbReference type="SMART" id="SM01374">
    <property type="entry name" value="Ribosomal_L14"/>
    <property type="match status" value="1"/>
</dbReference>
<dbReference type="SUPFAM" id="SSF50193">
    <property type="entry name" value="Ribosomal protein L14"/>
    <property type="match status" value="1"/>
</dbReference>
<dbReference type="PROSITE" id="PS00049">
    <property type="entry name" value="RIBOSOMAL_L14"/>
    <property type="match status" value="1"/>
</dbReference>
<evidence type="ECO:0000255" key="1">
    <source>
        <dbReference type="HAMAP-Rule" id="MF_01367"/>
    </source>
</evidence>
<evidence type="ECO:0000305" key="2"/>
<protein>
    <recommendedName>
        <fullName evidence="1">Large ribosomal subunit protein uL14</fullName>
    </recommendedName>
    <alternativeName>
        <fullName evidence="2">50S ribosomal protein L14</fullName>
    </alternativeName>
</protein>
<sequence>MIQTQSMLDVADNSGARRVMCIKVLGGSHRRYAGIGDIIKVTVKEAIPRGKVKKGQVMTAVVVRTRHGVRRADGSIIRFDGNAAVLLNNKQEPIGTRIFGPVTRELRTEKFMKIVSLAPEVL</sequence>
<feature type="chain" id="PRO_1000087140" description="Large ribosomal subunit protein uL14">
    <location>
        <begin position="1"/>
        <end position="122"/>
    </location>
</feature>
<keyword id="KW-0687">Ribonucleoprotein</keyword>
<keyword id="KW-0689">Ribosomal protein</keyword>
<keyword id="KW-0694">RNA-binding</keyword>
<keyword id="KW-0699">rRNA-binding</keyword>
<proteinExistence type="inferred from homology"/>
<accession>B0KK77</accession>